<reference key="1">
    <citation type="journal article" date="2009" name="J. Bacteriol.">
        <title>Genomic sequencing reveals regulatory mutations and recombinational events in the widely used MC4100 lineage of Escherichia coli K-12.</title>
        <authorList>
            <person name="Ferenci T."/>
            <person name="Zhou Z."/>
            <person name="Betteridge T."/>
            <person name="Ren Y."/>
            <person name="Liu Y."/>
            <person name="Feng L."/>
            <person name="Reeves P.R."/>
            <person name="Wang L."/>
        </authorList>
    </citation>
    <scope>NUCLEOTIDE SEQUENCE [LARGE SCALE GENOMIC DNA]</scope>
    <source>
        <strain>K12 / MC4100 / BW2952</strain>
    </source>
</reference>
<comment type="function">
    <text evidence="1">Catalyzes the cleavage of 5-oxoproline to form L-glutamate coupled to the hydrolysis of ATP to ADP and inorganic phosphate.</text>
</comment>
<comment type="catalytic activity">
    <reaction evidence="1">
        <text>5-oxo-L-proline + ATP + 2 H2O = L-glutamate + ADP + phosphate + H(+)</text>
        <dbReference type="Rhea" id="RHEA:10348"/>
        <dbReference type="ChEBI" id="CHEBI:15377"/>
        <dbReference type="ChEBI" id="CHEBI:15378"/>
        <dbReference type="ChEBI" id="CHEBI:29985"/>
        <dbReference type="ChEBI" id="CHEBI:30616"/>
        <dbReference type="ChEBI" id="CHEBI:43474"/>
        <dbReference type="ChEBI" id="CHEBI:58402"/>
        <dbReference type="ChEBI" id="CHEBI:456216"/>
        <dbReference type="EC" id="3.5.2.9"/>
    </reaction>
</comment>
<comment type="subunit">
    <text evidence="1">Forms a complex composed of PxpA, PxpB and PxpC.</text>
</comment>
<comment type="similarity">
    <text evidence="1">Belongs to the LamB/PxpA family.</text>
</comment>
<sequence length="244" mass="25800">MKIDLNADLGEGCASDAELLTLVSSANIACGFHAGDAQIMQACVREAIKNGVAIGAHPSFPDRENFGRSAMQLPPETVYAQTLYQIGALATIARAQGGVMRHVKPHGMLYNQAAKEAQLADAIARAVYACDPALILVGLAGSELIRAGKQYGLTTREEVFADRGYQADGSLVPRSQSGALIENEEQALAQTLEMVQHGRVKSITGEWATVAAQTVCLHGDGEHALAFARRLRSAFAEKGIVVAA</sequence>
<proteinExistence type="inferred from homology"/>
<dbReference type="EC" id="3.5.2.9" evidence="1"/>
<dbReference type="EMBL" id="CP001396">
    <property type="protein sequence ID" value="ACR64606.1"/>
    <property type="molecule type" value="Genomic_DNA"/>
</dbReference>
<dbReference type="RefSeq" id="WP_000687112.1">
    <property type="nucleotide sequence ID" value="NC_012759.1"/>
</dbReference>
<dbReference type="SMR" id="C4ZWI8"/>
<dbReference type="KEGG" id="ebw:BWG_0572"/>
<dbReference type="HOGENOM" id="CLU_069535_0_0_6"/>
<dbReference type="GO" id="GO:0017168">
    <property type="term" value="F:5-oxoprolinase (ATP-hydrolyzing) activity"/>
    <property type="evidence" value="ECO:0007669"/>
    <property type="project" value="UniProtKB-UniRule"/>
</dbReference>
<dbReference type="GO" id="GO:0005524">
    <property type="term" value="F:ATP binding"/>
    <property type="evidence" value="ECO:0007669"/>
    <property type="project" value="UniProtKB-UniRule"/>
</dbReference>
<dbReference type="GO" id="GO:0005975">
    <property type="term" value="P:carbohydrate metabolic process"/>
    <property type="evidence" value="ECO:0007669"/>
    <property type="project" value="InterPro"/>
</dbReference>
<dbReference type="CDD" id="cd10800">
    <property type="entry name" value="LamB_YcsF_YbgL_like"/>
    <property type="match status" value="1"/>
</dbReference>
<dbReference type="Gene3D" id="3.20.20.370">
    <property type="entry name" value="Glycoside hydrolase/deacetylase"/>
    <property type="match status" value="1"/>
</dbReference>
<dbReference type="HAMAP" id="MF_00691">
    <property type="entry name" value="PxpA"/>
    <property type="match status" value="1"/>
</dbReference>
<dbReference type="InterPro" id="IPR011330">
    <property type="entry name" value="Glyco_hydro/deAcase_b/a-brl"/>
</dbReference>
<dbReference type="InterPro" id="IPR005501">
    <property type="entry name" value="LamB/YcsF/PxpA-like"/>
</dbReference>
<dbReference type="NCBIfam" id="NF003812">
    <property type="entry name" value="PRK05406.1-1"/>
    <property type="match status" value="1"/>
</dbReference>
<dbReference type="NCBIfam" id="NF003814">
    <property type="entry name" value="PRK05406.1-3"/>
    <property type="match status" value="1"/>
</dbReference>
<dbReference type="NCBIfam" id="NF003815">
    <property type="entry name" value="PRK05406.1-4"/>
    <property type="match status" value="1"/>
</dbReference>
<dbReference type="NCBIfam" id="NF003816">
    <property type="entry name" value="PRK05406.1-5"/>
    <property type="match status" value="1"/>
</dbReference>
<dbReference type="PANTHER" id="PTHR30292:SF0">
    <property type="entry name" value="5-OXOPROLINASE SUBUNIT A"/>
    <property type="match status" value="1"/>
</dbReference>
<dbReference type="PANTHER" id="PTHR30292">
    <property type="entry name" value="UNCHARACTERIZED PROTEIN YBGL-RELATED"/>
    <property type="match status" value="1"/>
</dbReference>
<dbReference type="Pfam" id="PF03746">
    <property type="entry name" value="LamB_YcsF"/>
    <property type="match status" value="1"/>
</dbReference>
<dbReference type="SUPFAM" id="SSF88713">
    <property type="entry name" value="Glycoside hydrolase/deacetylase"/>
    <property type="match status" value="1"/>
</dbReference>
<name>PXPA_ECOBW</name>
<keyword id="KW-0067">ATP-binding</keyword>
<keyword id="KW-0378">Hydrolase</keyword>
<keyword id="KW-0547">Nucleotide-binding</keyword>
<feature type="chain" id="PRO_1000212583" description="5-oxoprolinase subunit A">
    <location>
        <begin position="1"/>
        <end position="244"/>
    </location>
</feature>
<organism>
    <name type="scientific">Escherichia coli (strain K12 / MC4100 / BW2952)</name>
    <dbReference type="NCBI Taxonomy" id="595496"/>
    <lineage>
        <taxon>Bacteria</taxon>
        <taxon>Pseudomonadati</taxon>
        <taxon>Pseudomonadota</taxon>
        <taxon>Gammaproteobacteria</taxon>
        <taxon>Enterobacterales</taxon>
        <taxon>Enterobacteriaceae</taxon>
        <taxon>Escherichia</taxon>
    </lineage>
</organism>
<protein>
    <recommendedName>
        <fullName evidence="1">5-oxoprolinase subunit A</fullName>
        <shortName evidence="1">5-OPase subunit A</shortName>
        <ecNumber evidence="1">3.5.2.9</ecNumber>
    </recommendedName>
    <alternativeName>
        <fullName evidence="1">5-oxoprolinase (ATP-hydrolyzing) subunit A</fullName>
    </alternativeName>
</protein>
<gene>
    <name evidence="1" type="primary">pxpA</name>
    <name type="ordered locus">BWG_0572</name>
</gene>
<accession>C4ZWI8</accession>
<evidence type="ECO:0000255" key="1">
    <source>
        <dbReference type="HAMAP-Rule" id="MF_00691"/>
    </source>
</evidence>